<dbReference type="EC" id="4.2.3.-" evidence="4"/>
<dbReference type="EMBL" id="KL659308">
    <property type="protein sequence ID" value="KFA70092.1"/>
    <property type="molecule type" value="Genomic_DNA"/>
</dbReference>
<dbReference type="SMR" id="A0A084R1K7"/>
<dbReference type="STRING" id="1283841.A0A084R1K7"/>
<dbReference type="HOGENOM" id="CLU_042677_0_0_1"/>
<dbReference type="InParanoid" id="A0A084R1K7"/>
<dbReference type="OMA" id="YLEFRIL"/>
<dbReference type="OrthoDB" id="6921389at2759"/>
<dbReference type="Proteomes" id="UP000028524">
    <property type="component" value="Unassembled WGS sequence"/>
</dbReference>
<dbReference type="GO" id="GO:0016829">
    <property type="term" value="F:lyase activity"/>
    <property type="evidence" value="ECO:0007669"/>
    <property type="project" value="UniProtKB-KW"/>
</dbReference>
<dbReference type="Gene3D" id="1.10.600.10">
    <property type="entry name" value="Farnesyl Diphosphate Synthase"/>
    <property type="match status" value="1"/>
</dbReference>
<dbReference type="InterPro" id="IPR008949">
    <property type="entry name" value="Isoprenoid_synthase_dom_sf"/>
</dbReference>
<dbReference type="Pfam" id="PF19086">
    <property type="entry name" value="Terpene_syn_C_2"/>
    <property type="match status" value="1"/>
</dbReference>
<dbReference type="SUPFAM" id="SSF48576">
    <property type="entry name" value="Terpenoid synthases"/>
    <property type="match status" value="1"/>
</dbReference>
<comment type="function">
    <text evidence="1 4">Terpene cyclase; part of the core atranone cluster (CAC) which products are predicted to catalyze most or all steps of mycotoxin atranone synthesis, starting from geranylgeranyl pyrophosphate (GGPP) (PubMed:25015739). The initial cyclization of GGPP to dolabellane is probably performed by the terpene cyclase ATR13 (PubMed:25015739). The Baeyer-Villiger oxidation near the end of the atranone synthesis, which converts atranones D and E to atranones F and G is predicted to be catalyzed by the monooxygenase ATR8 (PubMed:25015739). Of the CAC's other predicted gene products, the reducing PKS ATR6 might synthesize a polyketide chain (PubMed:25015739). This polyketide is probably transferred onto the atranone backbone by the polyketide transferase ATR5 (By similarity). Other predicted CAC products include 4 oxygenases (ATR2, ATR3, ATR4, and ATR14), 3 short-chain reductases (ATR7, ATR9, and ATR10), and a methyltransferase (ATR12) (PubMed:25015739). These may all be involved in the various steps of atranone biosynthesis, although their specific roles must await experimental determination (PubMed:25015739).</text>
</comment>
<comment type="pathway">
    <text evidence="4">Mycotoxin biosynthesis.</text>
</comment>
<comment type="similarity">
    <text evidence="3">Belongs to the terpene synthase family.</text>
</comment>
<reference key="1">
    <citation type="journal article" date="2014" name="BMC Genomics">
        <title>Comparative genome sequencing reveals chemotype-specific gene clusters in the toxigenic black mold Stachybotrys.</title>
        <authorList>
            <person name="Semeiks J."/>
            <person name="Borek D."/>
            <person name="Otwinowski Z."/>
            <person name="Grishin N.V."/>
        </authorList>
    </citation>
    <scope>NUCLEOTIDE SEQUENCE [LARGE SCALE GENOMIC DNA]</scope>
    <scope>IDENTIFICATION</scope>
    <scope>FUNCTION</scope>
    <source>
        <strain>IBT 40285</strain>
    </source>
</reference>
<accession>A0A084R1K7</accession>
<organism>
    <name type="scientific">Stachybotrys chlorohalonatus (strain IBT 40285)</name>
    <dbReference type="NCBI Taxonomy" id="1283841"/>
    <lineage>
        <taxon>Eukaryota</taxon>
        <taxon>Fungi</taxon>
        <taxon>Dikarya</taxon>
        <taxon>Ascomycota</taxon>
        <taxon>Pezizomycotina</taxon>
        <taxon>Sordariomycetes</taxon>
        <taxon>Hypocreomycetidae</taxon>
        <taxon>Hypocreales</taxon>
        <taxon>Stachybotryaceae</taxon>
        <taxon>Stachybotrys</taxon>
    </lineage>
</organism>
<gene>
    <name evidence="2" type="primary">ATR13</name>
    <name type="ORF">S40285_03337</name>
</gene>
<keyword id="KW-0456">Lyase</keyword>
<keyword id="KW-1185">Reference proteome</keyword>
<proteinExistence type="inferred from homology"/>
<name>ATR13_STAC4</name>
<feature type="chain" id="PRO_0000442412" description="Terpene cyclase ATR13">
    <location>
        <begin position="1"/>
        <end position="381"/>
    </location>
</feature>
<evidence type="ECO:0000250" key="1">
    <source>
        <dbReference type="UniProtKB" id="Q4WAY4"/>
    </source>
</evidence>
<evidence type="ECO:0000303" key="2">
    <source>
    </source>
</evidence>
<evidence type="ECO:0000305" key="3"/>
<evidence type="ECO:0000305" key="4">
    <source>
    </source>
</evidence>
<sequence length="381" mass="43218">MALEEISERLQVSDFPTLGMAANYDLRRHKFESLANDGSHEMRADVRRWVGNPSDFGGCNPINGHIIALTMPMIKPDRVKIAGYIYECWFLYSWDLTTTLTGADGFFHDDILEGTNEGVSDTDAFGLGTADQDAKARDGRKQIQAKMMYLLETTDKACAKHLQKVWSNMLVTTIQHKSRDFETLKEYIDFRIRDCGALFGEGVMLFGMGLALTEKDREDVASTIYPCYAALGLTNDYFSFDREWEEAKRTGEAKFSNAVRLFMDWQSTGAAAAKEVVRKAIIEYEREFLELREKFVKANPKAERLHKFLEAMVYQISGHVVWSINCPRYNPSFRYDPNSGVENQVLAERRGKSSSKKPSVMIEEIDEKSHLASETGPAMIA</sequence>
<protein>
    <recommendedName>
        <fullName evidence="2">Terpene cyclase ATR13</fullName>
        <ecNumber evidence="4">4.2.3.-</ecNumber>
    </recommendedName>
    <alternativeName>
        <fullName evidence="2">Core atranone cluster (CAC) protein 13</fullName>
    </alternativeName>
</protein>